<evidence type="ECO:0000255" key="1">
    <source>
        <dbReference type="HAMAP-Rule" id="MF_01218"/>
    </source>
</evidence>
<organism>
    <name type="scientific">Escherichia coli (strain K12 / DH10B)</name>
    <dbReference type="NCBI Taxonomy" id="316385"/>
    <lineage>
        <taxon>Bacteria</taxon>
        <taxon>Pseudomonadati</taxon>
        <taxon>Pseudomonadota</taxon>
        <taxon>Gammaproteobacteria</taxon>
        <taxon>Enterobacterales</taxon>
        <taxon>Enterobacteriaceae</taxon>
        <taxon>Escherichia</taxon>
    </lineage>
</organism>
<reference key="1">
    <citation type="journal article" date="2008" name="J. Bacteriol.">
        <title>The complete genome sequence of Escherichia coli DH10B: insights into the biology of a laboratory workhorse.</title>
        <authorList>
            <person name="Durfee T."/>
            <person name="Nelson R."/>
            <person name="Baldwin S."/>
            <person name="Plunkett G. III"/>
            <person name="Burland V."/>
            <person name="Mau B."/>
            <person name="Petrosino J.F."/>
            <person name="Qin X."/>
            <person name="Muzny D.M."/>
            <person name="Ayele M."/>
            <person name="Gibbs R.A."/>
            <person name="Csorgo B."/>
            <person name="Posfai G."/>
            <person name="Weinstock G.M."/>
            <person name="Blattner F.R."/>
        </authorList>
    </citation>
    <scope>NUCLEOTIDE SEQUENCE [LARGE SCALE GENOMIC DNA]</scope>
    <source>
        <strain>K12 / DH10B</strain>
    </source>
</reference>
<sequence length="208" mass="22533">MKIVEVKHPLVKHKLGLMREQDISTKRFRELASEVGSLLTYEATADLETEKVTIEGWNGPVEIDQIKGKKITVVPILRAGLGMMDGVLENVPSARISVVGMYRNEETLEPVPYFQKLVSNIDERMALIVDPMLATGGSVIATIDLLKKAGCSSIKVLVLVAAPEGIAALEKAHPDVELYTASIDQGLNEHGYIIPGLGDAGDKIFGTK</sequence>
<proteinExistence type="inferred from homology"/>
<accession>B1XAX3</accession>
<feature type="chain" id="PRO_1000139121" description="Uracil phosphoribosyltransferase">
    <location>
        <begin position="1"/>
        <end position="208"/>
    </location>
</feature>
<feature type="binding site" evidence="1">
    <location>
        <position position="78"/>
    </location>
    <ligand>
        <name>5-phospho-alpha-D-ribose 1-diphosphate</name>
        <dbReference type="ChEBI" id="CHEBI:58017"/>
    </ligand>
</feature>
<feature type="binding site" evidence="1">
    <location>
        <position position="103"/>
    </location>
    <ligand>
        <name>5-phospho-alpha-D-ribose 1-diphosphate</name>
        <dbReference type="ChEBI" id="CHEBI:58017"/>
    </ligand>
</feature>
<feature type="binding site" evidence="1">
    <location>
        <begin position="130"/>
        <end position="138"/>
    </location>
    <ligand>
        <name>5-phospho-alpha-D-ribose 1-diphosphate</name>
        <dbReference type="ChEBI" id="CHEBI:58017"/>
    </ligand>
</feature>
<feature type="binding site" evidence="1">
    <location>
        <position position="193"/>
    </location>
    <ligand>
        <name>uracil</name>
        <dbReference type="ChEBI" id="CHEBI:17568"/>
    </ligand>
</feature>
<feature type="binding site" evidence="1">
    <location>
        <begin position="198"/>
        <end position="200"/>
    </location>
    <ligand>
        <name>uracil</name>
        <dbReference type="ChEBI" id="CHEBI:17568"/>
    </ligand>
</feature>
<feature type="binding site" evidence="1">
    <location>
        <position position="199"/>
    </location>
    <ligand>
        <name>5-phospho-alpha-D-ribose 1-diphosphate</name>
        <dbReference type="ChEBI" id="CHEBI:58017"/>
    </ligand>
</feature>
<name>UPP_ECODH</name>
<gene>
    <name evidence="1" type="primary">upp</name>
    <name type="ordered locus">ECDH10B_2664</name>
</gene>
<protein>
    <recommendedName>
        <fullName evidence="1">Uracil phosphoribosyltransferase</fullName>
        <ecNumber evidence="1">2.4.2.9</ecNumber>
    </recommendedName>
    <alternativeName>
        <fullName evidence="1">UMP pyrophosphorylase</fullName>
    </alternativeName>
    <alternativeName>
        <fullName evidence="1">UPRTase</fullName>
    </alternativeName>
</protein>
<comment type="function">
    <text evidence="1">Catalyzes the conversion of uracil and 5-phospho-alpha-D-ribose 1-diphosphate (PRPP) to UMP and diphosphate.</text>
</comment>
<comment type="catalytic activity">
    <reaction evidence="1">
        <text>UMP + diphosphate = 5-phospho-alpha-D-ribose 1-diphosphate + uracil</text>
        <dbReference type="Rhea" id="RHEA:13017"/>
        <dbReference type="ChEBI" id="CHEBI:17568"/>
        <dbReference type="ChEBI" id="CHEBI:33019"/>
        <dbReference type="ChEBI" id="CHEBI:57865"/>
        <dbReference type="ChEBI" id="CHEBI:58017"/>
        <dbReference type="EC" id="2.4.2.9"/>
    </reaction>
</comment>
<comment type="cofactor">
    <cofactor evidence="1">
        <name>Mg(2+)</name>
        <dbReference type="ChEBI" id="CHEBI:18420"/>
    </cofactor>
    <text evidence="1">Binds 1 Mg(2+) ion per subunit. The magnesium is bound as Mg-PRPP.</text>
</comment>
<comment type="activity regulation">
    <text evidence="1">Allosterically activated by GTP.</text>
</comment>
<comment type="pathway">
    <text evidence="1">Pyrimidine metabolism; UMP biosynthesis via salvage pathway; UMP from uracil: step 1/1.</text>
</comment>
<comment type="similarity">
    <text evidence="1">Belongs to the UPRTase family.</text>
</comment>
<keyword id="KW-0021">Allosteric enzyme</keyword>
<keyword id="KW-0328">Glycosyltransferase</keyword>
<keyword id="KW-0342">GTP-binding</keyword>
<keyword id="KW-0460">Magnesium</keyword>
<keyword id="KW-0547">Nucleotide-binding</keyword>
<keyword id="KW-0808">Transferase</keyword>
<dbReference type="EC" id="2.4.2.9" evidence="1"/>
<dbReference type="EMBL" id="CP000948">
    <property type="protein sequence ID" value="ACB03650.1"/>
    <property type="molecule type" value="Genomic_DNA"/>
</dbReference>
<dbReference type="RefSeq" id="WP_001295473.1">
    <property type="nucleotide sequence ID" value="NC_010473.1"/>
</dbReference>
<dbReference type="SMR" id="B1XAX3"/>
<dbReference type="GeneID" id="93774638"/>
<dbReference type="KEGG" id="ecd:ECDH10B_2664"/>
<dbReference type="HOGENOM" id="CLU_067096_2_2_6"/>
<dbReference type="UniPathway" id="UPA00574">
    <property type="reaction ID" value="UER00636"/>
</dbReference>
<dbReference type="GO" id="GO:0005525">
    <property type="term" value="F:GTP binding"/>
    <property type="evidence" value="ECO:0007669"/>
    <property type="project" value="UniProtKB-KW"/>
</dbReference>
<dbReference type="GO" id="GO:0000287">
    <property type="term" value="F:magnesium ion binding"/>
    <property type="evidence" value="ECO:0007669"/>
    <property type="project" value="UniProtKB-UniRule"/>
</dbReference>
<dbReference type="GO" id="GO:0004845">
    <property type="term" value="F:uracil phosphoribosyltransferase activity"/>
    <property type="evidence" value="ECO:0007669"/>
    <property type="project" value="UniProtKB-UniRule"/>
</dbReference>
<dbReference type="GO" id="GO:0044206">
    <property type="term" value="P:UMP salvage"/>
    <property type="evidence" value="ECO:0007669"/>
    <property type="project" value="UniProtKB-UniRule"/>
</dbReference>
<dbReference type="GO" id="GO:0006223">
    <property type="term" value="P:uracil salvage"/>
    <property type="evidence" value="ECO:0007669"/>
    <property type="project" value="InterPro"/>
</dbReference>
<dbReference type="CDD" id="cd06223">
    <property type="entry name" value="PRTases_typeI"/>
    <property type="match status" value="1"/>
</dbReference>
<dbReference type="FunFam" id="3.40.50.2020:FF:000003">
    <property type="entry name" value="Uracil phosphoribosyltransferase"/>
    <property type="match status" value="1"/>
</dbReference>
<dbReference type="Gene3D" id="3.40.50.2020">
    <property type="match status" value="1"/>
</dbReference>
<dbReference type="HAMAP" id="MF_01218_B">
    <property type="entry name" value="Upp_B"/>
    <property type="match status" value="1"/>
</dbReference>
<dbReference type="InterPro" id="IPR000836">
    <property type="entry name" value="PRibTrfase_dom"/>
</dbReference>
<dbReference type="InterPro" id="IPR029057">
    <property type="entry name" value="PRTase-like"/>
</dbReference>
<dbReference type="InterPro" id="IPR034332">
    <property type="entry name" value="Upp_B"/>
</dbReference>
<dbReference type="InterPro" id="IPR050054">
    <property type="entry name" value="UPRTase/APRTase"/>
</dbReference>
<dbReference type="InterPro" id="IPR005765">
    <property type="entry name" value="Ura_phspho_trans"/>
</dbReference>
<dbReference type="NCBIfam" id="NF001097">
    <property type="entry name" value="PRK00129.1"/>
    <property type="match status" value="1"/>
</dbReference>
<dbReference type="NCBIfam" id="TIGR01091">
    <property type="entry name" value="upp"/>
    <property type="match status" value="1"/>
</dbReference>
<dbReference type="PANTHER" id="PTHR32315">
    <property type="entry name" value="ADENINE PHOSPHORIBOSYLTRANSFERASE"/>
    <property type="match status" value="1"/>
</dbReference>
<dbReference type="PANTHER" id="PTHR32315:SF4">
    <property type="entry name" value="URACIL PHOSPHORIBOSYLTRANSFERASE, CHLOROPLASTIC"/>
    <property type="match status" value="1"/>
</dbReference>
<dbReference type="Pfam" id="PF14681">
    <property type="entry name" value="UPRTase"/>
    <property type="match status" value="1"/>
</dbReference>
<dbReference type="SUPFAM" id="SSF53271">
    <property type="entry name" value="PRTase-like"/>
    <property type="match status" value="1"/>
</dbReference>